<protein>
    <recommendedName>
        <fullName evidence="1">Small ribosomal subunit protein uS19</fullName>
    </recommendedName>
    <alternativeName>
        <fullName evidence="2">30S ribosomal protein S19</fullName>
    </alternativeName>
</protein>
<dbReference type="EMBL" id="AJ938182">
    <property type="protein sequence ID" value="CAI81807.1"/>
    <property type="molecule type" value="Genomic_DNA"/>
</dbReference>
<dbReference type="RefSeq" id="WP_000124353.1">
    <property type="nucleotide sequence ID" value="NC_007622.1"/>
</dbReference>
<dbReference type="SMR" id="Q2YYQ0"/>
<dbReference type="GeneID" id="98346558"/>
<dbReference type="KEGG" id="sab:SAB2118c"/>
<dbReference type="HOGENOM" id="CLU_144911_0_1_9"/>
<dbReference type="GO" id="GO:0005737">
    <property type="term" value="C:cytoplasm"/>
    <property type="evidence" value="ECO:0007669"/>
    <property type="project" value="UniProtKB-ARBA"/>
</dbReference>
<dbReference type="GO" id="GO:0015935">
    <property type="term" value="C:small ribosomal subunit"/>
    <property type="evidence" value="ECO:0007669"/>
    <property type="project" value="InterPro"/>
</dbReference>
<dbReference type="GO" id="GO:0019843">
    <property type="term" value="F:rRNA binding"/>
    <property type="evidence" value="ECO:0007669"/>
    <property type="project" value="UniProtKB-UniRule"/>
</dbReference>
<dbReference type="GO" id="GO:0003735">
    <property type="term" value="F:structural constituent of ribosome"/>
    <property type="evidence" value="ECO:0007669"/>
    <property type="project" value="InterPro"/>
</dbReference>
<dbReference type="GO" id="GO:0000028">
    <property type="term" value="P:ribosomal small subunit assembly"/>
    <property type="evidence" value="ECO:0007669"/>
    <property type="project" value="TreeGrafter"/>
</dbReference>
<dbReference type="GO" id="GO:0006412">
    <property type="term" value="P:translation"/>
    <property type="evidence" value="ECO:0007669"/>
    <property type="project" value="UniProtKB-UniRule"/>
</dbReference>
<dbReference type="FunFam" id="3.30.860.10:FF:000001">
    <property type="entry name" value="30S ribosomal protein S19"/>
    <property type="match status" value="1"/>
</dbReference>
<dbReference type="Gene3D" id="3.30.860.10">
    <property type="entry name" value="30s Ribosomal Protein S19, Chain A"/>
    <property type="match status" value="1"/>
</dbReference>
<dbReference type="HAMAP" id="MF_00531">
    <property type="entry name" value="Ribosomal_uS19"/>
    <property type="match status" value="1"/>
</dbReference>
<dbReference type="InterPro" id="IPR002222">
    <property type="entry name" value="Ribosomal_uS19"/>
</dbReference>
<dbReference type="InterPro" id="IPR005732">
    <property type="entry name" value="Ribosomal_uS19_bac-type"/>
</dbReference>
<dbReference type="InterPro" id="IPR020934">
    <property type="entry name" value="Ribosomal_uS19_CS"/>
</dbReference>
<dbReference type="InterPro" id="IPR023575">
    <property type="entry name" value="Ribosomal_uS19_SF"/>
</dbReference>
<dbReference type="NCBIfam" id="TIGR01050">
    <property type="entry name" value="rpsS_bact"/>
    <property type="match status" value="1"/>
</dbReference>
<dbReference type="PANTHER" id="PTHR11880">
    <property type="entry name" value="RIBOSOMAL PROTEIN S19P FAMILY MEMBER"/>
    <property type="match status" value="1"/>
</dbReference>
<dbReference type="PANTHER" id="PTHR11880:SF8">
    <property type="entry name" value="SMALL RIBOSOMAL SUBUNIT PROTEIN US19M"/>
    <property type="match status" value="1"/>
</dbReference>
<dbReference type="Pfam" id="PF00203">
    <property type="entry name" value="Ribosomal_S19"/>
    <property type="match status" value="1"/>
</dbReference>
<dbReference type="PIRSF" id="PIRSF002144">
    <property type="entry name" value="Ribosomal_S19"/>
    <property type="match status" value="1"/>
</dbReference>
<dbReference type="PRINTS" id="PR00975">
    <property type="entry name" value="RIBOSOMALS19"/>
</dbReference>
<dbReference type="SUPFAM" id="SSF54570">
    <property type="entry name" value="Ribosomal protein S19"/>
    <property type="match status" value="1"/>
</dbReference>
<dbReference type="PROSITE" id="PS00323">
    <property type="entry name" value="RIBOSOMAL_S19"/>
    <property type="match status" value="1"/>
</dbReference>
<accession>Q2YYQ0</accession>
<sequence length="92" mass="10615">MARSIKKGPFVDEHLMKKVEAQEGSEKKQVIKTWSRRSTIFPNFIGHTFAVYDGRKHVPVYVTEDMVGHKLGEFAPTRTFKGHVADDKKTRR</sequence>
<comment type="function">
    <text evidence="1">Protein S19 forms a complex with S13 that binds strongly to the 16S ribosomal RNA.</text>
</comment>
<comment type="similarity">
    <text evidence="1">Belongs to the universal ribosomal protein uS19 family.</text>
</comment>
<organism>
    <name type="scientific">Staphylococcus aureus (strain bovine RF122 / ET3-1)</name>
    <dbReference type="NCBI Taxonomy" id="273036"/>
    <lineage>
        <taxon>Bacteria</taxon>
        <taxon>Bacillati</taxon>
        <taxon>Bacillota</taxon>
        <taxon>Bacilli</taxon>
        <taxon>Bacillales</taxon>
        <taxon>Staphylococcaceae</taxon>
        <taxon>Staphylococcus</taxon>
    </lineage>
</organism>
<name>RS19_STAAB</name>
<keyword id="KW-0687">Ribonucleoprotein</keyword>
<keyword id="KW-0689">Ribosomal protein</keyword>
<keyword id="KW-0694">RNA-binding</keyword>
<keyword id="KW-0699">rRNA-binding</keyword>
<reference key="1">
    <citation type="journal article" date="2007" name="PLoS ONE">
        <title>Molecular correlates of host specialization in Staphylococcus aureus.</title>
        <authorList>
            <person name="Herron-Olson L."/>
            <person name="Fitzgerald J.R."/>
            <person name="Musser J.M."/>
            <person name="Kapur V."/>
        </authorList>
    </citation>
    <scope>NUCLEOTIDE SEQUENCE [LARGE SCALE GENOMIC DNA]</scope>
    <source>
        <strain>bovine RF122 / ET3-1</strain>
    </source>
</reference>
<proteinExistence type="inferred from homology"/>
<gene>
    <name evidence="1" type="primary">rpsS</name>
    <name type="ordered locus">SAB2118c</name>
</gene>
<feature type="chain" id="PRO_0000265438" description="Small ribosomal subunit protein uS19">
    <location>
        <begin position="1"/>
        <end position="92"/>
    </location>
</feature>
<evidence type="ECO:0000255" key="1">
    <source>
        <dbReference type="HAMAP-Rule" id="MF_00531"/>
    </source>
</evidence>
<evidence type="ECO:0000305" key="2"/>